<feature type="propeptide" id="PRO_0000026868" evidence="1">
    <location>
        <begin position="1"/>
        <end position="15"/>
    </location>
</feature>
<feature type="chain" id="PRO_0000026869" description="Germination protease">
    <location>
        <begin position="16"/>
        <end position="370"/>
    </location>
</feature>
<feature type="sequence conflict" description="In Ref. 1; AAA22499." evidence="2" ref="1">
    <original>E</original>
    <variation>EE</variation>
    <location>
        <position position="89"/>
    </location>
</feature>
<feature type="helix" evidence="3">
    <location>
        <begin position="19"/>
        <end position="27"/>
    </location>
</feature>
<feature type="strand" evidence="3">
    <location>
        <begin position="43"/>
        <end position="51"/>
    </location>
</feature>
<feature type="strand" evidence="3">
    <location>
        <begin position="54"/>
        <end position="61"/>
    </location>
</feature>
<feature type="helix" evidence="3">
    <location>
        <begin position="63"/>
        <end position="66"/>
    </location>
</feature>
<feature type="turn" evidence="3">
    <location>
        <begin position="67"/>
        <end position="70"/>
    </location>
</feature>
<feature type="strand" evidence="3">
    <location>
        <begin position="74"/>
        <end position="80"/>
    </location>
</feature>
<feature type="strand" evidence="3">
    <location>
        <begin position="84"/>
        <end position="89"/>
    </location>
</feature>
<feature type="helix" evidence="3">
    <location>
        <begin position="90"/>
        <end position="105"/>
    </location>
</feature>
<feature type="strand" evidence="3">
    <location>
        <begin position="114"/>
        <end position="118"/>
    </location>
</feature>
<feature type="strand" evidence="3">
    <location>
        <begin position="122"/>
        <end position="124"/>
    </location>
</feature>
<feature type="helix" evidence="3">
    <location>
        <begin position="125"/>
        <end position="127"/>
    </location>
</feature>
<feature type="helix" evidence="3">
    <location>
        <begin position="129"/>
        <end position="135"/>
    </location>
</feature>
<feature type="helix" evidence="3">
    <location>
        <begin position="141"/>
        <end position="146"/>
    </location>
</feature>
<feature type="strand" evidence="3">
    <location>
        <begin position="158"/>
        <end position="161"/>
    </location>
</feature>
<feature type="helix" evidence="3">
    <location>
        <begin position="164"/>
        <end position="166"/>
    </location>
</feature>
<feature type="helix" evidence="3">
    <location>
        <begin position="173"/>
        <end position="184"/>
    </location>
</feature>
<feature type="strand" evidence="3">
    <location>
        <begin position="187"/>
        <end position="195"/>
    </location>
</feature>
<feature type="helix" evidence="3">
    <location>
        <begin position="200"/>
        <end position="202"/>
    </location>
</feature>
<feature type="strand" evidence="3">
    <location>
        <begin position="203"/>
        <end position="210"/>
    </location>
</feature>
<feature type="strand" evidence="3">
    <location>
        <begin position="218"/>
        <end position="221"/>
    </location>
</feature>
<feature type="strand" evidence="3">
    <location>
        <begin position="226"/>
        <end position="229"/>
    </location>
</feature>
<feature type="strand" evidence="3">
    <location>
        <begin position="245"/>
        <end position="251"/>
    </location>
</feature>
<feature type="strand" evidence="3">
    <location>
        <begin position="254"/>
        <end position="256"/>
    </location>
</feature>
<feature type="helix" evidence="3">
    <location>
        <begin position="260"/>
        <end position="263"/>
    </location>
</feature>
<feature type="turn" evidence="3">
    <location>
        <begin position="264"/>
        <end position="268"/>
    </location>
</feature>
<feature type="helix" evidence="3">
    <location>
        <begin position="315"/>
        <end position="322"/>
    </location>
</feature>
<feature type="strand" evidence="3">
    <location>
        <begin position="330"/>
        <end position="334"/>
    </location>
</feature>
<feature type="helix" evidence="3">
    <location>
        <begin position="337"/>
        <end position="352"/>
    </location>
</feature>
<feature type="helix" evidence="3">
    <location>
        <begin position="353"/>
        <end position="356"/>
    </location>
</feature>
<comment type="function">
    <text>Initiates the rapid degradation of small, acid-soluble proteins during spore germination.</text>
</comment>
<comment type="catalytic activity">
    <reaction>
        <text>Endopeptidase action with P4 Glu or Asp, P1 preferably Glu &gt; Asp, P1' hydrophobic and P2' Ala.</text>
        <dbReference type="EC" id="3.4.24.78"/>
    </reaction>
</comment>
<comment type="subunit">
    <text>Homotetramer.</text>
</comment>
<comment type="developmental stage">
    <text>GPR transcription occurs during sporulation in forespore first by sigma-F and then by sigma-G.</text>
</comment>
<comment type="PTM">
    <text>Autoproteolytically processed. The inactive tetrameric zymogen termed p46 autoprocesses to a smaller form termed p41, which is active only during spore germination.</text>
</comment>
<comment type="similarity">
    <text evidence="2">Belongs to the peptidase A25 family.</text>
</comment>
<evidence type="ECO:0000269" key="1">
    <source>
    </source>
</evidence>
<evidence type="ECO:0000305" key="2"/>
<evidence type="ECO:0007829" key="3">
    <source>
        <dbReference type="PDB" id="1C8B"/>
    </source>
</evidence>
<organism>
    <name type="scientific">Priestia megaterium (strain ATCC 12872 / QMB1551)</name>
    <name type="common">Bacillus megaterium</name>
    <dbReference type="NCBI Taxonomy" id="545693"/>
    <lineage>
        <taxon>Bacteria</taxon>
        <taxon>Bacillati</taxon>
        <taxon>Bacillota</taxon>
        <taxon>Bacilli</taxon>
        <taxon>Bacillales</taxon>
        <taxon>Bacillaceae</taxon>
        <taxon>Priestia</taxon>
    </lineage>
</organism>
<reference key="1">
    <citation type="journal article" date="1991" name="J. Bacteriol.">
        <title>Cloning, nucleotide sequence, and regulation of the Bacillus subtilis gpr gene, which codes for the protease that initiates degradation of small, acid-soluble proteins during spore germination.</title>
        <authorList>
            <person name="Sussman M.D."/>
            <person name="Setlow P."/>
        </authorList>
    </citation>
    <scope>NUCLEOTIDE SEQUENCE [GENOMIC DNA]</scope>
    <scope>PROTEIN SEQUENCE OF 16-31</scope>
</reference>
<reference key="2">
    <citation type="journal article" date="2011" name="J. Bacteriol.">
        <title>Genome sequences of the biotechnologically important Bacillus megaterium strains QM B1551 and DSM319.</title>
        <authorList>
            <person name="Eppinger M."/>
            <person name="Bunk B."/>
            <person name="Johns M.A."/>
            <person name="Edirisinghe J.N."/>
            <person name="Kutumbaka K.K."/>
            <person name="Koenig S.S."/>
            <person name="Creasy H.H."/>
            <person name="Rosovitz M.J."/>
            <person name="Riley D.R."/>
            <person name="Daugherty S."/>
            <person name="Martin M."/>
            <person name="Elbourne L.D."/>
            <person name="Paulsen I."/>
            <person name="Biedendieck R."/>
            <person name="Braun C."/>
            <person name="Grayburn S."/>
            <person name="Dhingra S."/>
            <person name="Lukyanchuk V."/>
            <person name="Ball B."/>
            <person name="Ul-Qamar R."/>
            <person name="Seibel J."/>
            <person name="Bremer E."/>
            <person name="Jahn D."/>
            <person name="Ravel J."/>
            <person name="Vary P.S."/>
        </authorList>
    </citation>
    <scope>NUCLEOTIDE SEQUENCE [LARGE SCALE GENOMIC DNA]</scope>
    <source>
        <strain>ATCC 12872 / DSM 1804 / QMB1551</strain>
    </source>
</reference>
<reference key="3">
    <citation type="journal article" date="1998" name="J. Bacteriol.">
        <title>Structure and mechanism of action of the protease that degrades small, acid-soluble spore proteins during germination of spores of Bacillus species.</title>
        <authorList>
            <person name="Nessi C."/>
            <person name="Jedrzejas M.J."/>
            <person name="Setlow P."/>
        </authorList>
    </citation>
    <scope>CHARACTERIZATION</scope>
</reference>
<reference key="4">
    <citation type="journal article" date="2000" name="J. Mol. Biol.">
        <title>Crystal structure of a novel germination protease from spores of Bacillus megaterium: structural arrangement and zymogen activation.</title>
        <authorList>
            <person name="Ponnuraj K."/>
            <person name="Rowland S."/>
            <person name="Nessi C."/>
            <person name="Setlow P."/>
            <person name="Jedrzejas M.J."/>
        </authorList>
    </citation>
    <scope>X-RAY CRYSTALLOGRAPHY (3.0 ANGSTROMS) OF ZYMOGEN P46</scope>
</reference>
<dbReference type="EC" id="3.4.24.78"/>
<dbReference type="EMBL" id="M55262">
    <property type="protein sequence ID" value="AAA22499.1"/>
    <property type="molecule type" value="Genomic_DNA"/>
</dbReference>
<dbReference type="EMBL" id="CP001983">
    <property type="protein sequence ID" value="ADE71575.1"/>
    <property type="molecule type" value="Genomic_DNA"/>
</dbReference>
<dbReference type="PIR" id="A39198">
    <property type="entry name" value="A39198"/>
</dbReference>
<dbReference type="RefSeq" id="WP_013059248.1">
    <property type="nucleotide sequence ID" value="NC_014019.1"/>
</dbReference>
<dbReference type="PDB" id="1C8B">
    <property type="method" value="X-ray"/>
    <property type="resolution" value="3.00 A"/>
    <property type="chains" value="A/B=1-370"/>
</dbReference>
<dbReference type="PDBsum" id="1C8B"/>
<dbReference type="SMR" id="P22321"/>
<dbReference type="STRING" id="545693.BMQ_4571"/>
<dbReference type="MEROPS" id="A25.001"/>
<dbReference type="KEGG" id="bmq:BMQ_4571"/>
<dbReference type="eggNOG" id="COG0680">
    <property type="taxonomic scope" value="Bacteria"/>
</dbReference>
<dbReference type="HOGENOM" id="CLU_055087_1_0_9"/>
<dbReference type="BRENDA" id="3.4.24.78">
    <property type="organism ID" value="656"/>
</dbReference>
<dbReference type="EvolutionaryTrace" id="P22321"/>
<dbReference type="Proteomes" id="UP000000935">
    <property type="component" value="Chromosome"/>
</dbReference>
<dbReference type="GO" id="GO:0004222">
    <property type="term" value="F:metalloendopeptidase activity"/>
    <property type="evidence" value="ECO:0007669"/>
    <property type="project" value="UniProtKB-UniRule"/>
</dbReference>
<dbReference type="GO" id="GO:0006508">
    <property type="term" value="P:proteolysis"/>
    <property type="evidence" value="ECO:0007669"/>
    <property type="project" value="UniProtKB-UniRule"/>
</dbReference>
<dbReference type="GO" id="GO:0009847">
    <property type="term" value="P:spore germination"/>
    <property type="evidence" value="ECO:0007669"/>
    <property type="project" value="UniProtKB-UniRule"/>
</dbReference>
<dbReference type="Gene3D" id="3.40.50.1450">
    <property type="entry name" value="HybD-like"/>
    <property type="match status" value="1"/>
</dbReference>
<dbReference type="HAMAP" id="MF_00626">
    <property type="entry name" value="Germination_prot"/>
    <property type="match status" value="1"/>
</dbReference>
<dbReference type="InterPro" id="IPR023430">
    <property type="entry name" value="Pept_HybD-like_dom_sf"/>
</dbReference>
<dbReference type="InterPro" id="IPR005080">
    <property type="entry name" value="Peptidase_A25"/>
</dbReference>
<dbReference type="NCBIfam" id="TIGR01441">
    <property type="entry name" value="GPR"/>
    <property type="match status" value="1"/>
</dbReference>
<dbReference type="Pfam" id="PF03418">
    <property type="entry name" value="Peptidase_A25"/>
    <property type="match status" value="1"/>
</dbReference>
<dbReference type="PIRSF" id="PIRSF019549">
    <property type="entry name" value="Peptidase_A25"/>
    <property type="match status" value="1"/>
</dbReference>
<dbReference type="SUPFAM" id="SSF53163">
    <property type="entry name" value="HybD-like"/>
    <property type="match status" value="1"/>
</dbReference>
<protein>
    <recommendedName>
        <fullName>Germination protease</fullName>
        <ecNumber>3.4.24.78</ecNumber>
    </recommendedName>
    <alternativeName>
        <fullName>GPR endopeptidase</fullName>
    </alternativeName>
    <alternativeName>
        <fullName>Germination proteinase</fullName>
    </alternativeName>
    <alternativeName>
        <fullName>Spore protease</fullName>
    </alternativeName>
</protein>
<accession>P22321</accession>
<accession>D5DSW3</accession>
<sequence length="370" mass="40497">MEKELDLSQYSVRTDLAVEAKDIALENQPKPNNQSEIKGVIVKEKEEQGVKISMVEITEEGAEAIGKKKGRYVTLESVGIREQDTEKQEAMEEVFAKELNFFIKSLNIPDDASCLVVGLGNLSVTPDALGPKAVDNLLITRHLFELQPESVQDGFRPVSAIVPGVMGMTGIETSDIIFGVVKKVNPDFIIAIDALAARSIERVNATIQISDSGIHPGSGVGNKRKEISYETLGIPVIAIGIPTVVDAVSITSDTIDFILKHFGREMKEQGKPSKSLLPSGMTFGEKKKLTEDDLPNEEQRQTYLGMIGTLPDEEKRRLIHEVLAPLGHNLMVTPKEVDMFIEDMANVVAGGLNAALHHEVDQENFGAYTH</sequence>
<keyword id="KW-0002">3D-structure</keyword>
<keyword id="KW-0903">Direct protein sequencing</keyword>
<keyword id="KW-0378">Hydrolase</keyword>
<keyword id="KW-0645">Protease</keyword>
<keyword id="KW-1185">Reference proteome</keyword>
<keyword id="KW-0865">Zymogen</keyword>
<name>GPR_PRIM1</name>
<gene>
    <name type="primary">gpr</name>
    <name type="ordered locus">BMQ_4571</name>
</gene>
<proteinExistence type="evidence at protein level"/>